<keyword id="KW-0150">Chloroplast</keyword>
<keyword id="KW-0934">Plastid</keyword>
<keyword id="KW-1185">Reference proteome</keyword>
<keyword id="KW-0687">Ribonucleoprotein</keyword>
<keyword id="KW-0689">Ribosomal protein</keyword>
<keyword id="KW-0694">RNA-binding</keyword>
<keyword id="KW-0699">rRNA-binding</keyword>
<geneLocation type="chloroplast"/>
<reference key="1">
    <citation type="journal article" date="2006" name="Mol. Genet. Genomics">
        <title>The chloroplast genome of Nicotiana sylvestris and Nicotiana tomentosiformis: complete sequencing confirms that the Nicotiana sylvestris progenitor is the maternal genome donor of Nicotiana tabacum.</title>
        <authorList>
            <person name="Yukawa M."/>
            <person name="Tsudzuki T."/>
            <person name="Sugiura M."/>
        </authorList>
    </citation>
    <scope>NUCLEOTIDE SEQUENCE [LARGE SCALE GENOMIC DNA]</scope>
</reference>
<gene>
    <name type="primary">rps8</name>
</gene>
<sequence>MGRDTIAEIITSIRNADMDRKRVVRIASTNITENIVQILLREGFIENVRKHREKNKYFLVLTLRHRRNRKRPYRNILNLKRISRPGLRIYSNYQRIPRILGGMGIVILSTSRGIMTDREARLEGIGGEILCYIW</sequence>
<protein>
    <recommendedName>
        <fullName evidence="2">Small ribosomal subunit protein uS8c</fullName>
    </recommendedName>
    <alternativeName>
        <fullName>30S ribosomal protein S8, chloroplastic</fullName>
    </alternativeName>
</protein>
<accession>Q3C1M0</accession>
<proteinExistence type="inferred from homology"/>
<organism>
    <name type="scientific">Nicotiana sylvestris</name>
    <name type="common">Wood tobacco</name>
    <name type="synonym">South American tobacco</name>
    <dbReference type="NCBI Taxonomy" id="4096"/>
    <lineage>
        <taxon>Eukaryota</taxon>
        <taxon>Viridiplantae</taxon>
        <taxon>Streptophyta</taxon>
        <taxon>Embryophyta</taxon>
        <taxon>Tracheophyta</taxon>
        <taxon>Spermatophyta</taxon>
        <taxon>Magnoliopsida</taxon>
        <taxon>eudicotyledons</taxon>
        <taxon>Gunneridae</taxon>
        <taxon>Pentapetalae</taxon>
        <taxon>asterids</taxon>
        <taxon>lamiids</taxon>
        <taxon>Solanales</taxon>
        <taxon>Solanaceae</taxon>
        <taxon>Nicotianoideae</taxon>
        <taxon>Nicotianeae</taxon>
        <taxon>Nicotiana</taxon>
    </lineage>
</organism>
<evidence type="ECO:0000250" key="1"/>
<evidence type="ECO:0000305" key="2"/>
<dbReference type="EMBL" id="AB237912">
    <property type="protein sequence ID" value="BAE46689.1"/>
    <property type="molecule type" value="Genomic_DNA"/>
</dbReference>
<dbReference type="RefSeq" id="YP_358713.1">
    <property type="nucleotide sequence ID" value="NC_007500.1"/>
</dbReference>
<dbReference type="SMR" id="Q3C1M0"/>
<dbReference type="GeneID" id="3735200"/>
<dbReference type="KEGG" id="nsy:3735200"/>
<dbReference type="OrthoDB" id="23344at4085"/>
<dbReference type="Proteomes" id="UP000189701">
    <property type="component" value="Chloroplast Pltd"/>
</dbReference>
<dbReference type="GO" id="GO:0009507">
    <property type="term" value="C:chloroplast"/>
    <property type="evidence" value="ECO:0007669"/>
    <property type="project" value="UniProtKB-SubCell"/>
</dbReference>
<dbReference type="GO" id="GO:1990904">
    <property type="term" value="C:ribonucleoprotein complex"/>
    <property type="evidence" value="ECO:0007669"/>
    <property type="project" value="UniProtKB-KW"/>
</dbReference>
<dbReference type="GO" id="GO:0005840">
    <property type="term" value="C:ribosome"/>
    <property type="evidence" value="ECO:0007669"/>
    <property type="project" value="UniProtKB-KW"/>
</dbReference>
<dbReference type="GO" id="GO:0019843">
    <property type="term" value="F:rRNA binding"/>
    <property type="evidence" value="ECO:0007669"/>
    <property type="project" value="UniProtKB-UniRule"/>
</dbReference>
<dbReference type="GO" id="GO:0003735">
    <property type="term" value="F:structural constituent of ribosome"/>
    <property type="evidence" value="ECO:0007669"/>
    <property type="project" value="InterPro"/>
</dbReference>
<dbReference type="GO" id="GO:0006412">
    <property type="term" value="P:translation"/>
    <property type="evidence" value="ECO:0007669"/>
    <property type="project" value="UniProtKB-UniRule"/>
</dbReference>
<dbReference type="FunFam" id="3.30.1490.10:FF:000001">
    <property type="entry name" value="30S ribosomal protein S8"/>
    <property type="match status" value="1"/>
</dbReference>
<dbReference type="FunFam" id="3.30.1370.30:FF:000004">
    <property type="entry name" value="30S ribosomal protein S8, chloroplastic"/>
    <property type="match status" value="1"/>
</dbReference>
<dbReference type="Gene3D" id="3.30.1370.30">
    <property type="match status" value="1"/>
</dbReference>
<dbReference type="Gene3D" id="3.30.1490.10">
    <property type="match status" value="1"/>
</dbReference>
<dbReference type="HAMAP" id="MF_01302_B">
    <property type="entry name" value="Ribosomal_uS8_B"/>
    <property type="match status" value="1"/>
</dbReference>
<dbReference type="InterPro" id="IPR000630">
    <property type="entry name" value="Ribosomal_uS8"/>
</dbReference>
<dbReference type="InterPro" id="IPR047863">
    <property type="entry name" value="Ribosomal_uS8_CS"/>
</dbReference>
<dbReference type="InterPro" id="IPR035987">
    <property type="entry name" value="Ribosomal_uS8_sf"/>
</dbReference>
<dbReference type="NCBIfam" id="NF001109">
    <property type="entry name" value="PRK00136.1"/>
    <property type="match status" value="1"/>
</dbReference>
<dbReference type="PANTHER" id="PTHR11758">
    <property type="entry name" value="40S RIBOSOMAL PROTEIN S15A"/>
    <property type="match status" value="1"/>
</dbReference>
<dbReference type="Pfam" id="PF00410">
    <property type="entry name" value="Ribosomal_S8"/>
    <property type="match status" value="1"/>
</dbReference>
<dbReference type="SUPFAM" id="SSF56047">
    <property type="entry name" value="Ribosomal protein S8"/>
    <property type="match status" value="1"/>
</dbReference>
<dbReference type="PROSITE" id="PS00053">
    <property type="entry name" value="RIBOSOMAL_S8"/>
    <property type="match status" value="1"/>
</dbReference>
<name>RR8_NICSY</name>
<comment type="function">
    <text evidence="1">One of the primary rRNA binding proteins, it binds directly to 16S rRNA central domain where it helps coordinate assembly of the platform of the 30S subunit.</text>
</comment>
<comment type="subunit">
    <text evidence="1">Part of the 30S ribosomal subunit.</text>
</comment>
<comment type="subcellular location">
    <subcellularLocation>
        <location>Plastid</location>
        <location>Chloroplast</location>
    </subcellularLocation>
</comment>
<comment type="similarity">
    <text evidence="2">Belongs to the universal ribosomal protein uS8 family.</text>
</comment>
<feature type="chain" id="PRO_0000225909" description="Small ribosomal subunit protein uS8c">
    <location>
        <begin position="1"/>
        <end position="134"/>
    </location>
</feature>